<comment type="alternative products">
    <event type="alternative splicing"/>
    <isoform>
        <id>P13492-1</id>
        <name>1</name>
        <sequence type="displayed"/>
    </isoform>
    <isoform>
        <id>P13492-2</id>
        <name>2</name>
        <sequence type="described" ref="VSP_004087"/>
    </isoform>
    <text>Additional isoforms seem to exist.</text>
</comment>
<comment type="developmental stage">
    <text>Different-sized isoforms are expressed in the adult and cercarial stages.</text>
</comment>
<comment type="miscellaneous">
    <text>This antigen is recognized by sera from infected human.</text>
</comment>
<comment type="miscellaneous">
    <text>Isoforms are highly similar and contain variable numbers of identical direct tandem repeats of 81 bases.</text>
</comment>
<feature type="signal peptide" evidence="1">
    <location>
        <begin position="1"/>
        <end position="21"/>
    </location>
</feature>
<feature type="chain" id="PRO_0000020578" description="Antigen 10-3">
    <location>
        <begin position="22"/>
        <end position="263"/>
    </location>
</feature>
<feature type="repeat" description="1">
    <location>
        <begin position="81"/>
        <end position="107"/>
    </location>
</feature>
<feature type="repeat" description="2">
    <location>
        <begin position="108"/>
        <end position="134"/>
    </location>
</feature>
<feature type="repeat" description="3">
    <location>
        <begin position="135"/>
        <end position="161"/>
    </location>
</feature>
<feature type="repeat" description="4">
    <location>
        <begin position="162"/>
        <end position="188"/>
    </location>
</feature>
<feature type="repeat" description="5">
    <location>
        <begin position="189"/>
        <end position="206"/>
    </location>
</feature>
<feature type="region of interest" description="Disordered" evidence="2">
    <location>
        <begin position="70"/>
        <end position="207"/>
    </location>
</feature>
<feature type="region of interest" description="5 X 27 AA tandem repeats">
    <location>
        <begin position="81"/>
        <end position="189"/>
    </location>
</feature>
<feature type="compositionally biased region" description="Low complexity" evidence="2">
    <location>
        <begin position="78"/>
        <end position="90"/>
    </location>
</feature>
<feature type="compositionally biased region" description="Basic and acidic residues" evidence="2">
    <location>
        <begin position="95"/>
        <end position="104"/>
    </location>
</feature>
<feature type="compositionally biased region" description="Basic and acidic residues" evidence="2">
    <location>
        <begin position="122"/>
        <end position="131"/>
    </location>
</feature>
<feature type="compositionally biased region" description="Basic and acidic residues" evidence="2">
    <location>
        <begin position="149"/>
        <end position="158"/>
    </location>
</feature>
<feature type="compositionally biased region" description="Basic and acidic residues" evidence="2">
    <location>
        <begin position="176"/>
        <end position="185"/>
    </location>
</feature>
<feature type="splice variant" id="VSP_004087" description="In isoform 2." evidence="3">
    <location>
        <begin position="61"/>
        <end position="70"/>
    </location>
</feature>
<sequence>MNIYLIGILCIVGLIISQGSTANGSPLDDRFNDVNTINKKQFTEEEFSRLINSMLKKYIEDKNVDIRIIGNKKDKQPTQKTTPKPTTPKQINDGTSDKTSDTHTIKRTTPKPTTPKQINDGTSDKTSDTHTIKRTTPKPTTPKQINDGTSDKTSDTHTIKRTTPKPTTPKQINDGTSDKTSDTHTIKRTTPKPTTPKQINDGTSDKPKSIADIFLINKPKVPLWIVNPLYYMVEKFVQIMGYLLEDDDTLELNLPKYYYDKSI</sequence>
<evidence type="ECO:0000255" key="1"/>
<evidence type="ECO:0000256" key="2">
    <source>
        <dbReference type="SAM" id="MobiDB-lite"/>
    </source>
</evidence>
<evidence type="ECO:0000303" key="3">
    <source>
    </source>
</evidence>
<name>A103_SCHMA</name>
<proteinExistence type="evidence at transcript level"/>
<reference key="1">
    <citation type="journal article" date="1988" name="Mol. Cell. Biol.">
        <title>Tandemly repeated exons encode 81-base repeats in multiple, developmentally regulated Schistosoma mansoni transcripts.</title>
        <authorList>
            <person name="Davis R.E."/>
            <person name="Davis A.H."/>
            <person name="Carroll S.M."/>
            <person name="Rajkovic A."/>
            <person name="Rottman F.M."/>
        </authorList>
    </citation>
    <scope>NUCLEOTIDE SEQUENCE [MRNA] (ISOFORMS 1 AND 2)</scope>
    <source>
        <strain>Puerto Rican</strain>
    </source>
</reference>
<keyword id="KW-0025">Alternative splicing</keyword>
<keyword id="KW-1185">Reference proteome</keyword>
<keyword id="KW-0677">Repeat</keyword>
<keyword id="KW-0732">Signal</keyword>
<dbReference type="EMBL" id="M22346">
    <property type="protein sequence ID" value="AAA29855.1"/>
    <property type="molecule type" value="mRNA"/>
</dbReference>
<dbReference type="PIR" id="A31561">
    <property type="entry name" value="A31561"/>
</dbReference>
<dbReference type="STRING" id="6183.P13492"/>
<dbReference type="InParanoid" id="P13492"/>
<dbReference type="Proteomes" id="UP000008854">
    <property type="component" value="Unassembled WGS sequence"/>
</dbReference>
<organism>
    <name type="scientific">Schistosoma mansoni</name>
    <name type="common">Blood fluke</name>
    <dbReference type="NCBI Taxonomy" id="6183"/>
    <lineage>
        <taxon>Eukaryota</taxon>
        <taxon>Metazoa</taxon>
        <taxon>Spiralia</taxon>
        <taxon>Lophotrochozoa</taxon>
        <taxon>Platyhelminthes</taxon>
        <taxon>Trematoda</taxon>
        <taxon>Digenea</taxon>
        <taxon>Strigeidida</taxon>
        <taxon>Schistosomatoidea</taxon>
        <taxon>Schistosomatidae</taxon>
        <taxon>Schistosoma</taxon>
    </lineage>
</organism>
<protein>
    <recommendedName>
        <fullName>Antigen 10-3</fullName>
    </recommendedName>
</protein>
<accession>P13492</accession>